<dbReference type="EC" id="3.6.5.-" evidence="1"/>
<dbReference type="EMBL" id="CP000255">
    <property type="protein sequence ID" value="ABD21811.1"/>
    <property type="molecule type" value="Genomic_DNA"/>
</dbReference>
<dbReference type="SMR" id="Q2FG83"/>
<dbReference type="KEGG" id="saa:SAUSA300_1600"/>
<dbReference type="HOGENOM" id="CLU_011747_2_1_9"/>
<dbReference type="OMA" id="VVFDWEP"/>
<dbReference type="Proteomes" id="UP000001939">
    <property type="component" value="Chromosome"/>
</dbReference>
<dbReference type="GO" id="GO:0005737">
    <property type="term" value="C:cytoplasm"/>
    <property type="evidence" value="ECO:0007669"/>
    <property type="project" value="UniProtKB-SubCell"/>
</dbReference>
<dbReference type="GO" id="GO:0005525">
    <property type="term" value="F:GTP binding"/>
    <property type="evidence" value="ECO:0007669"/>
    <property type="project" value="UniProtKB-UniRule"/>
</dbReference>
<dbReference type="GO" id="GO:0003924">
    <property type="term" value="F:GTPase activity"/>
    <property type="evidence" value="ECO:0007669"/>
    <property type="project" value="UniProtKB-UniRule"/>
</dbReference>
<dbReference type="GO" id="GO:0000287">
    <property type="term" value="F:magnesium ion binding"/>
    <property type="evidence" value="ECO:0007669"/>
    <property type="project" value="InterPro"/>
</dbReference>
<dbReference type="GO" id="GO:0042254">
    <property type="term" value="P:ribosome biogenesis"/>
    <property type="evidence" value="ECO:0007669"/>
    <property type="project" value="UniProtKB-UniRule"/>
</dbReference>
<dbReference type="CDD" id="cd01898">
    <property type="entry name" value="Obg"/>
    <property type="match status" value="1"/>
</dbReference>
<dbReference type="FunFam" id="2.70.210.12:FF:000001">
    <property type="entry name" value="GTPase Obg"/>
    <property type="match status" value="1"/>
</dbReference>
<dbReference type="FunFam" id="3.40.50.300:FF:000515">
    <property type="entry name" value="GTPase Obg"/>
    <property type="match status" value="1"/>
</dbReference>
<dbReference type="Gene3D" id="3.30.300.350">
    <property type="entry name" value="GTP-binding protein OBG, C-terminal domain"/>
    <property type="match status" value="1"/>
</dbReference>
<dbReference type="Gene3D" id="2.70.210.12">
    <property type="entry name" value="GTP1/OBG domain"/>
    <property type="match status" value="1"/>
</dbReference>
<dbReference type="Gene3D" id="3.40.50.300">
    <property type="entry name" value="P-loop containing nucleotide triphosphate hydrolases"/>
    <property type="match status" value="1"/>
</dbReference>
<dbReference type="HAMAP" id="MF_01454">
    <property type="entry name" value="GTPase_Obg"/>
    <property type="match status" value="1"/>
</dbReference>
<dbReference type="InterPro" id="IPR031167">
    <property type="entry name" value="G_OBG"/>
</dbReference>
<dbReference type="InterPro" id="IPR006073">
    <property type="entry name" value="GTP-bd"/>
</dbReference>
<dbReference type="InterPro" id="IPR014100">
    <property type="entry name" value="GTP-bd_Obg/CgtA"/>
</dbReference>
<dbReference type="InterPro" id="IPR036346">
    <property type="entry name" value="GTP-bd_prot_GTP1/OBG_C_sf"/>
</dbReference>
<dbReference type="InterPro" id="IPR006074">
    <property type="entry name" value="GTP1-OBG_CS"/>
</dbReference>
<dbReference type="InterPro" id="IPR006169">
    <property type="entry name" value="GTP1_OBG_dom"/>
</dbReference>
<dbReference type="InterPro" id="IPR036726">
    <property type="entry name" value="GTP1_OBG_dom_sf"/>
</dbReference>
<dbReference type="InterPro" id="IPR045086">
    <property type="entry name" value="OBG_GTPase"/>
</dbReference>
<dbReference type="InterPro" id="IPR015349">
    <property type="entry name" value="OCT_dom"/>
</dbReference>
<dbReference type="InterPro" id="IPR027417">
    <property type="entry name" value="P-loop_NTPase"/>
</dbReference>
<dbReference type="NCBIfam" id="TIGR02729">
    <property type="entry name" value="Obg_CgtA"/>
    <property type="match status" value="1"/>
</dbReference>
<dbReference type="NCBIfam" id="TIGR03595">
    <property type="entry name" value="Obg_CgtA_exten"/>
    <property type="match status" value="1"/>
</dbReference>
<dbReference type="NCBIfam" id="NF008954">
    <property type="entry name" value="PRK12296.1"/>
    <property type="match status" value="1"/>
</dbReference>
<dbReference type="NCBIfam" id="NF008955">
    <property type="entry name" value="PRK12297.1"/>
    <property type="match status" value="1"/>
</dbReference>
<dbReference type="NCBIfam" id="NF008956">
    <property type="entry name" value="PRK12299.1"/>
    <property type="match status" value="1"/>
</dbReference>
<dbReference type="PANTHER" id="PTHR11702">
    <property type="entry name" value="DEVELOPMENTALLY REGULATED GTP-BINDING PROTEIN-RELATED"/>
    <property type="match status" value="1"/>
</dbReference>
<dbReference type="PANTHER" id="PTHR11702:SF31">
    <property type="entry name" value="MITOCHONDRIAL RIBOSOME-ASSOCIATED GTPASE 2"/>
    <property type="match status" value="1"/>
</dbReference>
<dbReference type="Pfam" id="PF09269">
    <property type="entry name" value="DUF1967"/>
    <property type="match status" value="1"/>
</dbReference>
<dbReference type="Pfam" id="PF01018">
    <property type="entry name" value="GTP1_OBG"/>
    <property type="match status" value="1"/>
</dbReference>
<dbReference type="Pfam" id="PF01926">
    <property type="entry name" value="MMR_HSR1"/>
    <property type="match status" value="1"/>
</dbReference>
<dbReference type="PIRSF" id="PIRSF002401">
    <property type="entry name" value="GTP_bd_Obg/CgtA"/>
    <property type="match status" value="1"/>
</dbReference>
<dbReference type="PRINTS" id="PR00326">
    <property type="entry name" value="GTP1OBG"/>
</dbReference>
<dbReference type="SUPFAM" id="SSF102741">
    <property type="entry name" value="Obg GTP-binding protein C-terminal domain"/>
    <property type="match status" value="1"/>
</dbReference>
<dbReference type="SUPFAM" id="SSF82051">
    <property type="entry name" value="Obg GTP-binding protein N-terminal domain"/>
    <property type="match status" value="1"/>
</dbReference>
<dbReference type="SUPFAM" id="SSF52540">
    <property type="entry name" value="P-loop containing nucleoside triphosphate hydrolases"/>
    <property type="match status" value="1"/>
</dbReference>
<dbReference type="PROSITE" id="PS51710">
    <property type="entry name" value="G_OBG"/>
    <property type="match status" value="1"/>
</dbReference>
<dbReference type="PROSITE" id="PS00905">
    <property type="entry name" value="GTP1_OBG"/>
    <property type="match status" value="1"/>
</dbReference>
<dbReference type="PROSITE" id="PS51883">
    <property type="entry name" value="OBG"/>
    <property type="match status" value="1"/>
</dbReference>
<dbReference type="PROSITE" id="PS51881">
    <property type="entry name" value="OCT"/>
    <property type="match status" value="1"/>
</dbReference>
<comment type="function">
    <text evidence="1">An essential GTPase which binds GTP, GDP and possibly (p)ppGpp with moderate affinity, with high nucleotide exchange rates and a fairly low GTP hydrolysis rate. Plays a role in control of the cell cycle, stress response, ribosome biogenesis and in those bacteria that undergo differentiation, in morphogenesis control.</text>
</comment>
<comment type="cofactor">
    <cofactor evidence="1">
        <name>Mg(2+)</name>
        <dbReference type="ChEBI" id="CHEBI:18420"/>
    </cofactor>
</comment>
<comment type="subunit">
    <text evidence="1">Monomer.</text>
</comment>
<comment type="subcellular location">
    <subcellularLocation>
        <location evidence="1">Cytoplasm</location>
    </subcellularLocation>
</comment>
<comment type="similarity">
    <text evidence="1">Belongs to the TRAFAC class OBG-HflX-like GTPase superfamily. OBG GTPase family.</text>
</comment>
<name>OBG_STAA3</name>
<sequence>MFVDQVKISLKAGDGGNGITAYRREKYVPFGGPAGGDGGKGASVVFEVDEGLRTLLDFRYQRHFKASKGENGQSSNMHGKNAEDLVLKVPPGTIIKNVETDEVLADLVEDGQRAVVAKGGRGGRGNSRFATPRNPAPDFSEKGEPGEELDVSLELKLLADVGLVGFPSVGKSTLLSIVSKAKPKIGAYHFTTIKPNLGVVSTPDQRSFVMADLPGLIEGASDGVGLGHQFLRHVERTKVIVHMIDMSGSEGREPIEDYKVINQELAAYEQRLEDRPQIVVANKMDLPESQDNLNLFKEEIGEDVPVIPVSTITRDNIDQLLYAIADKLEEYKDVDFTVEEEESVGINRVLYKHTPSQDKFTISRDDDGAYVVSGNAIERMFKMTDFNSDPAVRRFARQMRSMGIDDALRERGCKNGDIVRILGGEFEFVE</sequence>
<keyword id="KW-0963">Cytoplasm</keyword>
<keyword id="KW-0342">GTP-binding</keyword>
<keyword id="KW-0378">Hydrolase</keyword>
<keyword id="KW-0460">Magnesium</keyword>
<keyword id="KW-0479">Metal-binding</keyword>
<keyword id="KW-0547">Nucleotide-binding</keyword>
<protein>
    <recommendedName>
        <fullName evidence="1">GTPase Obg</fullName>
        <ecNumber evidence="1">3.6.5.-</ecNumber>
    </recommendedName>
    <alternativeName>
        <fullName evidence="1">GTP-binding protein Obg</fullName>
    </alternativeName>
</protein>
<reference key="1">
    <citation type="journal article" date="2006" name="Lancet">
        <title>Complete genome sequence of USA300, an epidemic clone of community-acquired meticillin-resistant Staphylococcus aureus.</title>
        <authorList>
            <person name="Diep B.A."/>
            <person name="Gill S.R."/>
            <person name="Chang R.F."/>
            <person name="Phan T.H."/>
            <person name="Chen J.H."/>
            <person name="Davidson M.G."/>
            <person name="Lin F."/>
            <person name="Lin J."/>
            <person name="Carleton H.A."/>
            <person name="Mongodin E.F."/>
            <person name="Sensabaugh G.F."/>
            <person name="Perdreau-Remington F."/>
        </authorList>
    </citation>
    <scope>NUCLEOTIDE SEQUENCE [LARGE SCALE GENOMIC DNA]</scope>
    <source>
        <strain>USA300</strain>
    </source>
</reference>
<accession>Q2FG83</accession>
<proteinExistence type="inferred from homology"/>
<feature type="chain" id="PRO_0000386281" description="GTPase Obg">
    <location>
        <begin position="1"/>
        <end position="430"/>
    </location>
</feature>
<feature type="domain" description="Obg" evidence="3">
    <location>
        <begin position="1"/>
        <end position="158"/>
    </location>
</feature>
<feature type="domain" description="OBG-type G" evidence="1">
    <location>
        <begin position="159"/>
        <end position="329"/>
    </location>
</feature>
<feature type="domain" description="OCT" evidence="2">
    <location>
        <begin position="352"/>
        <end position="430"/>
    </location>
</feature>
<feature type="region of interest" description="Disordered" evidence="4">
    <location>
        <begin position="118"/>
        <end position="145"/>
    </location>
</feature>
<feature type="binding site" evidence="1">
    <location>
        <begin position="165"/>
        <end position="172"/>
    </location>
    <ligand>
        <name>GTP</name>
        <dbReference type="ChEBI" id="CHEBI:37565"/>
    </ligand>
</feature>
<feature type="binding site" evidence="1">
    <location>
        <position position="172"/>
    </location>
    <ligand>
        <name>Mg(2+)</name>
        <dbReference type="ChEBI" id="CHEBI:18420"/>
    </ligand>
</feature>
<feature type="binding site" evidence="1">
    <location>
        <begin position="190"/>
        <end position="194"/>
    </location>
    <ligand>
        <name>GTP</name>
        <dbReference type="ChEBI" id="CHEBI:37565"/>
    </ligand>
</feature>
<feature type="binding site" evidence="1">
    <location>
        <position position="192"/>
    </location>
    <ligand>
        <name>Mg(2+)</name>
        <dbReference type="ChEBI" id="CHEBI:18420"/>
    </ligand>
</feature>
<feature type="binding site" evidence="1">
    <location>
        <begin position="212"/>
        <end position="215"/>
    </location>
    <ligand>
        <name>GTP</name>
        <dbReference type="ChEBI" id="CHEBI:37565"/>
    </ligand>
</feature>
<feature type="binding site" evidence="1">
    <location>
        <begin position="282"/>
        <end position="285"/>
    </location>
    <ligand>
        <name>GTP</name>
        <dbReference type="ChEBI" id="CHEBI:37565"/>
    </ligand>
</feature>
<feature type="binding site" evidence="1">
    <location>
        <begin position="310"/>
        <end position="312"/>
    </location>
    <ligand>
        <name>GTP</name>
        <dbReference type="ChEBI" id="CHEBI:37565"/>
    </ligand>
</feature>
<gene>
    <name evidence="1" type="primary">obg</name>
    <name type="ordered locus">SAUSA300_1600</name>
</gene>
<evidence type="ECO:0000255" key="1">
    <source>
        <dbReference type="HAMAP-Rule" id="MF_01454"/>
    </source>
</evidence>
<evidence type="ECO:0000255" key="2">
    <source>
        <dbReference type="PROSITE-ProRule" id="PRU01229"/>
    </source>
</evidence>
<evidence type="ECO:0000255" key="3">
    <source>
        <dbReference type="PROSITE-ProRule" id="PRU01231"/>
    </source>
</evidence>
<evidence type="ECO:0000256" key="4">
    <source>
        <dbReference type="SAM" id="MobiDB-lite"/>
    </source>
</evidence>
<organism>
    <name type="scientific">Staphylococcus aureus (strain USA300)</name>
    <dbReference type="NCBI Taxonomy" id="367830"/>
    <lineage>
        <taxon>Bacteria</taxon>
        <taxon>Bacillati</taxon>
        <taxon>Bacillota</taxon>
        <taxon>Bacilli</taxon>
        <taxon>Bacillales</taxon>
        <taxon>Staphylococcaceae</taxon>
        <taxon>Staphylococcus</taxon>
    </lineage>
</organism>